<reference key="1">
    <citation type="journal article" date="1996" name="Yeast">
        <title>Identification and characterization of cytosolic Hansenula polymorpha proteins belonging to the Hsp70 protein family.</title>
        <authorList>
            <person name="Titorenko V.I."/>
            <person name="Evers M.E."/>
            <person name="Diesel A."/>
            <person name="Samyn B."/>
            <person name="van Beeumen J."/>
            <person name="Roggenkamp R.O."/>
            <person name="Kiel J.A.K.W."/>
            <person name="van der Klei I.J."/>
            <person name="Veenhuis M."/>
        </authorList>
    </citation>
    <scope>NUCLEOTIDE SEQUENCE [GENOMIC DNA]</scope>
    <scope>PARTIAL PROTEIN SEQUENCE</scope>
    <source>
        <strain>ATCC 34438 / CBS 4732 / DSM 70277 / JCM 3621 / NBRC 1476 / NRRL Y-5445</strain>
    </source>
</reference>
<sequence length="645" mass="70138">MSKAVGIDLGTTYSCVAHFVNDRVEIIANDQGNRTTPSFVAFTDTERLIGDAAKNQAAMNPANTVFDAKRLIGRKFDDPEVQNDIKHFPFKVVEKGGKPHIQVEFKGETKVFTPEEISSMVLTKMKETAESYMGGKVTDAVITVPAYFNDSQRQATKDAGLIAGLNVLRIINEPTAAAIAYGLDKKEQGKGEQNILIFDLGGGTFDVSLLSIDEGIFEVKATAGDTHLGGEDFDNRLVNHFANEFKRKYKKDLTTNQRALRRLRTACERAKRTLSSSAQTSVEIDSLYEGIDFYTSITRARFEELCQDLFRSTLDPVEKVMRDGKLDKSQVAEIVLVGGSTRIPKIQKLVSDFFNGKEPNKSINPDEAVAYGAAVQAAILTGDTSSKTQDLLLLDVAPLSLGIETAGGVMTKLIPRNTTIPTKKSEIFSTYSDNQPGVLIQVYEGERAKTKDNNLLGKFELSGIPPAPRGVPQIEVTFDIDANGILNVSAVEKGTGKSQKITITNDKGRLSKEEIDRMVAEAEKYKEEDEKEAARIAAKNGLESYAYSLKQTASEKQFEEKVDASKRESLNKAIEETISWLDNNQSATTDEYEDKRKELEGIANDALKDLYAAGGVPGGAAPGGFPGAGGAAPGADQGPSVEEVD</sequence>
<proteinExistence type="evidence at protein level"/>
<dbReference type="EMBL" id="Z29379">
    <property type="protein sequence ID" value="CAA82570.1"/>
    <property type="molecule type" value="Genomic_DNA"/>
</dbReference>
<dbReference type="PIR" id="S41372">
    <property type="entry name" value="S41372"/>
</dbReference>
<dbReference type="SMR" id="P53421"/>
<dbReference type="GO" id="GO:0005737">
    <property type="term" value="C:cytoplasm"/>
    <property type="evidence" value="ECO:0007669"/>
    <property type="project" value="UniProtKB-SubCell"/>
</dbReference>
<dbReference type="GO" id="GO:0005524">
    <property type="term" value="F:ATP binding"/>
    <property type="evidence" value="ECO:0007669"/>
    <property type="project" value="UniProtKB-KW"/>
</dbReference>
<dbReference type="GO" id="GO:0140662">
    <property type="term" value="F:ATP-dependent protein folding chaperone"/>
    <property type="evidence" value="ECO:0007669"/>
    <property type="project" value="InterPro"/>
</dbReference>
<dbReference type="CDD" id="cd10233">
    <property type="entry name" value="ASKHA_NBD_HSP70_HSPA1"/>
    <property type="match status" value="1"/>
</dbReference>
<dbReference type="FunFam" id="2.60.34.10:FF:000002">
    <property type="entry name" value="Heat shock 70 kDa"/>
    <property type="match status" value="1"/>
</dbReference>
<dbReference type="FunFam" id="3.30.420.40:FF:000172">
    <property type="entry name" value="Heat shock 70 kDa protein"/>
    <property type="match status" value="2"/>
</dbReference>
<dbReference type="FunFam" id="3.90.640.10:FF:000058">
    <property type="entry name" value="Heat shock 70 kDa protein"/>
    <property type="match status" value="1"/>
</dbReference>
<dbReference type="FunFam" id="3.30.30.30:FF:000001">
    <property type="entry name" value="heat shock 70 kDa protein-like"/>
    <property type="match status" value="1"/>
</dbReference>
<dbReference type="FunFam" id="1.20.1270.10:FF:000016">
    <property type="entry name" value="Heat shock protein 70"/>
    <property type="match status" value="1"/>
</dbReference>
<dbReference type="FunFam" id="3.30.420.40:FF:000026">
    <property type="entry name" value="Heat shock protein 70"/>
    <property type="match status" value="1"/>
</dbReference>
<dbReference type="Gene3D" id="1.20.1270.10">
    <property type="match status" value="1"/>
</dbReference>
<dbReference type="Gene3D" id="3.30.30.30">
    <property type="match status" value="1"/>
</dbReference>
<dbReference type="Gene3D" id="3.30.420.40">
    <property type="match status" value="2"/>
</dbReference>
<dbReference type="Gene3D" id="3.90.640.10">
    <property type="entry name" value="Actin, Chain A, domain 4"/>
    <property type="match status" value="1"/>
</dbReference>
<dbReference type="Gene3D" id="2.60.34.10">
    <property type="entry name" value="Substrate Binding Domain Of DNAk, Chain A, domain 1"/>
    <property type="match status" value="1"/>
</dbReference>
<dbReference type="InterPro" id="IPR043129">
    <property type="entry name" value="ATPase_NBD"/>
</dbReference>
<dbReference type="InterPro" id="IPR018181">
    <property type="entry name" value="Heat_shock_70_CS"/>
</dbReference>
<dbReference type="InterPro" id="IPR029048">
    <property type="entry name" value="HSP70_C_sf"/>
</dbReference>
<dbReference type="InterPro" id="IPR029047">
    <property type="entry name" value="HSP70_peptide-bd_sf"/>
</dbReference>
<dbReference type="InterPro" id="IPR013126">
    <property type="entry name" value="Hsp_70_fam"/>
</dbReference>
<dbReference type="NCBIfam" id="NF001413">
    <property type="entry name" value="PRK00290.1"/>
    <property type="match status" value="1"/>
</dbReference>
<dbReference type="PANTHER" id="PTHR19375">
    <property type="entry name" value="HEAT SHOCK PROTEIN 70KDA"/>
    <property type="match status" value="1"/>
</dbReference>
<dbReference type="Pfam" id="PF00012">
    <property type="entry name" value="HSP70"/>
    <property type="match status" value="1"/>
</dbReference>
<dbReference type="PRINTS" id="PR00301">
    <property type="entry name" value="HEATSHOCK70"/>
</dbReference>
<dbReference type="SUPFAM" id="SSF53067">
    <property type="entry name" value="Actin-like ATPase domain"/>
    <property type="match status" value="2"/>
</dbReference>
<dbReference type="SUPFAM" id="SSF100934">
    <property type="entry name" value="Heat shock protein 70kD (HSP70), C-terminal subdomain"/>
    <property type="match status" value="1"/>
</dbReference>
<dbReference type="SUPFAM" id="SSF100920">
    <property type="entry name" value="Heat shock protein 70kD (HSP70), peptide-binding domain"/>
    <property type="match status" value="1"/>
</dbReference>
<dbReference type="PROSITE" id="PS00297">
    <property type="entry name" value="HSP70_1"/>
    <property type="match status" value="1"/>
</dbReference>
<dbReference type="PROSITE" id="PS00329">
    <property type="entry name" value="HSP70_2"/>
    <property type="match status" value="1"/>
</dbReference>
<dbReference type="PROSITE" id="PS01036">
    <property type="entry name" value="HSP70_3"/>
    <property type="match status" value="1"/>
</dbReference>
<evidence type="ECO:0000250" key="1"/>
<evidence type="ECO:0000256" key="2">
    <source>
        <dbReference type="SAM" id="MobiDB-lite"/>
    </source>
</evidence>
<evidence type="ECO:0000305" key="3"/>
<protein>
    <recommendedName>
        <fullName>Heat shock protein 70 1</fullName>
    </recommendedName>
    <alternativeName>
        <fullName>HSP72</fullName>
    </alternativeName>
</protein>
<feature type="initiator methionine" description="Removed" evidence="1">
    <location>
        <position position="1"/>
    </location>
</feature>
<feature type="chain" id="PRO_0000078376" description="Heat shock protein 70 1">
    <location>
        <begin position="2"/>
        <end position="645"/>
    </location>
</feature>
<feature type="region of interest" description="Disordered" evidence="2">
    <location>
        <begin position="612"/>
        <end position="645"/>
    </location>
</feature>
<feature type="compositionally biased region" description="Gly residues" evidence="2">
    <location>
        <begin position="615"/>
        <end position="632"/>
    </location>
</feature>
<feature type="modified residue" description="N-acetylserine" evidence="1">
    <location>
        <position position="2"/>
    </location>
</feature>
<accession>P53421</accession>
<name>HSP71_PICAN</name>
<keyword id="KW-0007">Acetylation</keyword>
<keyword id="KW-0067">ATP-binding</keyword>
<keyword id="KW-0143">Chaperone</keyword>
<keyword id="KW-0963">Cytoplasm</keyword>
<keyword id="KW-0903">Direct protein sequencing</keyword>
<keyword id="KW-0547">Nucleotide-binding</keyword>
<keyword id="KW-0346">Stress response</keyword>
<gene>
    <name type="primary">HSA1</name>
</gene>
<organism>
    <name type="scientific">Pichia angusta</name>
    <name type="common">Yeast</name>
    <name type="synonym">Hansenula polymorpha</name>
    <dbReference type="NCBI Taxonomy" id="870730"/>
    <lineage>
        <taxon>Eukaryota</taxon>
        <taxon>Fungi</taxon>
        <taxon>Dikarya</taxon>
        <taxon>Ascomycota</taxon>
        <taxon>Saccharomycotina</taxon>
        <taxon>Pichiomycetes</taxon>
        <taxon>Pichiales</taxon>
        <taxon>Pichiaceae</taxon>
        <taxon>Ogataea</taxon>
    </lineage>
</organism>
<comment type="function">
    <text evidence="1">Acts as a chaperone.</text>
</comment>
<comment type="subcellular location">
    <subcellularLocation>
        <location>Cytoplasm</location>
    </subcellularLocation>
</comment>
<comment type="induction">
    <text>By heat shock.</text>
</comment>
<comment type="similarity">
    <text evidence="3">Belongs to the heat shock protein 70 family.</text>
</comment>